<comment type="function">
    <text evidence="1">Cell wall formation. Catalyzes the addition of glutamate to the nucleotide precursor UDP-N-acetylmuramoyl-L-alanine (UMA).</text>
</comment>
<comment type="catalytic activity">
    <reaction evidence="1">
        <text>UDP-N-acetyl-alpha-D-muramoyl-L-alanine + D-glutamate + ATP = UDP-N-acetyl-alpha-D-muramoyl-L-alanyl-D-glutamate + ADP + phosphate + H(+)</text>
        <dbReference type="Rhea" id="RHEA:16429"/>
        <dbReference type="ChEBI" id="CHEBI:15378"/>
        <dbReference type="ChEBI" id="CHEBI:29986"/>
        <dbReference type="ChEBI" id="CHEBI:30616"/>
        <dbReference type="ChEBI" id="CHEBI:43474"/>
        <dbReference type="ChEBI" id="CHEBI:83898"/>
        <dbReference type="ChEBI" id="CHEBI:83900"/>
        <dbReference type="ChEBI" id="CHEBI:456216"/>
        <dbReference type="EC" id="6.3.2.9"/>
    </reaction>
</comment>
<comment type="pathway">
    <text evidence="1">Cell wall biogenesis; peptidoglycan biosynthesis.</text>
</comment>
<comment type="subcellular location">
    <subcellularLocation>
        <location evidence="1">Cytoplasm</location>
    </subcellularLocation>
</comment>
<comment type="similarity">
    <text evidence="1">Belongs to the MurCDEF family.</text>
</comment>
<gene>
    <name evidence="1" type="primary">murD</name>
    <name type="ordered locus">BF0308</name>
</gene>
<name>MURD_BACFR</name>
<sequence>MKRIVVLGAGESGAGAAVLAKVKGFDTFVSDMSAIKDKYKTLLDGHGIAWEEGRHTEEQILSADEVVKSPGIPNDAPLILRLREQGTPIISEIEFAGRYTDAKMICITGSNGKTTTTSLIYHIFKSAGLNVGLAGNIGKSLALQVAEEKHDYYVIELSSFQLDNMYNFRADIAVLMNITPDHLDRYDHCMQNYINAKFRITQNQTSEDAFIFWNDDPIIKRELDKHGIRAHLYPFSAIKEEGSIAYVEDHEVVITEPIAFNMEQEQLALTGQHNLYNSLAAGISANLAGITKEDIRKALSDFQGVEHRLEKVARVRGIDFINDSKATNVNSCWYALQSMTTKTVLILGGKDKGNDYTEIEELVREKCSALVYLGLHNEKLHEFFDRLGLPVAEVQTGMKDAVEAAYKLAKKGETVLLSPCCASFDLFKSYEDRGEQFKKYVREL</sequence>
<organism>
    <name type="scientific">Bacteroides fragilis (strain YCH46)</name>
    <dbReference type="NCBI Taxonomy" id="295405"/>
    <lineage>
        <taxon>Bacteria</taxon>
        <taxon>Pseudomonadati</taxon>
        <taxon>Bacteroidota</taxon>
        <taxon>Bacteroidia</taxon>
        <taxon>Bacteroidales</taxon>
        <taxon>Bacteroidaceae</taxon>
        <taxon>Bacteroides</taxon>
    </lineage>
</organism>
<protein>
    <recommendedName>
        <fullName evidence="1">UDP-N-acetylmuramoylalanine--D-glutamate ligase</fullName>
        <ecNumber evidence="1">6.3.2.9</ecNumber>
    </recommendedName>
    <alternativeName>
        <fullName evidence="1">D-glutamic acid-adding enzyme</fullName>
    </alternativeName>
    <alternativeName>
        <fullName evidence="1">UDP-N-acetylmuramoyl-L-alanyl-D-glutamate synthetase</fullName>
    </alternativeName>
</protein>
<proteinExistence type="inferred from homology"/>
<accession>Q64ZL9</accession>
<reference key="1">
    <citation type="journal article" date="2004" name="Proc. Natl. Acad. Sci. U.S.A.">
        <title>Genomic analysis of Bacteroides fragilis reveals extensive DNA inversions regulating cell surface adaptation.</title>
        <authorList>
            <person name="Kuwahara T."/>
            <person name="Yamashita A."/>
            <person name="Hirakawa H."/>
            <person name="Nakayama H."/>
            <person name="Toh H."/>
            <person name="Okada N."/>
            <person name="Kuhara S."/>
            <person name="Hattori M."/>
            <person name="Hayashi T."/>
            <person name="Ohnishi Y."/>
        </authorList>
    </citation>
    <scope>NUCLEOTIDE SEQUENCE [LARGE SCALE GENOMIC DNA]</scope>
    <source>
        <strain>YCH46</strain>
    </source>
</reference>
<dbReference type="EC" id="6.3.2.9" evidence="1"/>
<dbReference type="EMBL" id="AP006841">
    <property type="protein sequence ID" value="BAD47057.1"/>
    <property type="molecule type" value="Genomic_DNA"/>
</dbReference>
<dbReference type="RefSeq" id="WP_010991956.1">
    <property type="nucleotide sequence ID" value="NC_006347.1"/>
</dbReference>
<dbReference type="RefSeq" id="YP_097591.1">
    <property type="nucleotide sequence ID" value="NC_006347.1"/>
</dbReference>
<dbReference type="SMR" id="Q64ZL9"/>
<dbReference type="STRING" id="295405.BF0308"/>
<dbReference type="GeneID" id="60365878"/>
<dbReference type="KEGG" id="bfr:BF0308"/>
<dbReference type="PATRIC" id="fig|295405.11.peg.331"/>
<dbReference type="HOGENOM" id="CLU_032540_0_0_10"/>
<dbReference type="OrthoDB" id="9809796at2"/>
<dbReference type="UniPathway" id="UPA00219"/>
<dbReference type="Proteomes" id="UP000002197">
    <property type="component" value="Chromosome"/>
</dbReference>
<dbReference type="GO" id="GO:0005737">
    <property type="term" value="C:cytoplasm"/>
    <property type="evidence" value="ECO:0007669"/>
    <property type="project" value="UniProtKB-SubCell"/>
</dbReference>
<dbReference type="GO" id="GO:0005524">
    <property type="term" value="F:ATP binding"/>
    <property type="evidence" value="ECO:0007669"/>
    <property type="project" value="UniProtKB-UniRule"/>
</dbReference>
<dbReference type="GO" id="GO:0008764">
    <property type="term" value="F:UDP-N-acetylmuramoylalanine-D-glutamate ligase activity"/>
    <property type="evidence" value="ECO:0007669"/>
    <property type="project" value="UniProtKB-UniRule"/>
</dbReference>
<dbReference type="GO" id="GO:0051301">
    <property type="term" value="P:cell division"/>
    <property type="evidence" value="ECO:0007669"/>
    <property type="project" value="UniProtKB-KW"/>
</dbReference>
<dbReference type="GO" id="GO:0071555">
    <property type="term" value="P:cell wall organization"/>
    <property type="evidence" value="ECO:0007669"/>
    <property type="project" value="UniProtKB-KW"/>
</dbReference>
<dbReference type="GO" id="GO:0009252">
    <property type="term" value="P:peptidoglycan biosynthetic process"/>
    <property type="evidence" value="ECO:0007669"/>
    <property type="project" value="UniProtKB-UniRule"/>
</dbReference>
<dbReference type="GO" id="GO:0008360">
    <property type="term" value="P:regulation of cell shape"/>
    <property type="evidence" value="ECO:0007669"/>
    <property type="project" value="UniProtKB-KW"/>
</dbReference>
<dbReference type="Gene3D" id="3.90.190.20">
    <property type="entry name" value="Mur ligase, C-terminal domain"/>
    <property type="match status" value="1"/>
</dbReference>
<dbReference type="Gene3D" id="3.40.1190.10">
    <property type="entry name" value="Mur-like, catalytic domain"/>
    <property type="match status" value="1"/>
</dbReference>
<dbReference type="Gene3D" id="3.40.50.720">
    <property type="entry name" value="NAD(P)-binding Rossmann-like Domain"/>
    <property type="match status" value="1"/>
</dbReference>
<dbReference type="HAMAP" id="MF_00639">
    <property type="entry name" value="MurD"/>
    <property type="match status" value="1"/>
</dbReference>
<dbReference type="InterPro" id="IPR036565">
    <property type="entry name" value="Mur-like_cat_sf"/>
</dbReference>
<dbReference type="InterPro" id="IPR004101">
    <property type="entry name" value="Mur_ligase_C"/>
</dbReference>
<dbReference type="InterPro" id="IPR036615">
    <property type="entry name" value="Mur_ligase_C_dom_sf"/>
</dbReference>
<dbReference type="InterPro" id="IPR013221">
    <property type="entry name" value="Mur_ligase_cen"/>
</dbReference>
<dbReference type="InterPro" id="IPR005762">
    <property type="entry name" value="MurD"/>
</dbReference>
<dbReference type="NCBIfam" id="TIGR01087">
    <property type="entry name" value="murD"/>
    <property type="match status" value="1"/>
</dbReference>
<dbReference type="PANTHER" id="PTHR43692">
    <property type="entry name" value="UDP-N-ACETYLMURAMOYLALANINE--D-GLUTAMATE LIGASE"/>
    <property type="match status" value="1"/>
</dbReference>
<dbReference type="PANTHER" id="PTHR43692:SF1">
    <property type="entry name" value="UDP-N-ACETYLMURAMOYLALANINE--D-GLUTAMATE LIGASE"/>
    <property type="match status" value="1"/>
</dbReference>
<dbReference type="Pfam" id="PF02875">
    <property type="entry name" value="Mur_ligase_C"/>
    <property type="match status" value="1"/>
</dbReference>
<dbReference type="Pfam" id="PF08245">
    <property type="entry name" value="Mur_ligase_M"/>
    <property type="match status" value="1"/>
</dbReference>
<dbReference type="Pfam" id="PF21799">
    <property type="entry name" value="MurD-like_N"/>
    <property type="match status" value="1"/>
</dbReference>
<dbReference type="Pfam" id="PF21377">
    <property type="entry name" value="MurD_N"/>
    <property type="match status" value="1"/>
</dbReference>
<dbReference type="SUPFAM" id="SSF51984">
    <property type="entry name" value="MurCD N-terminal domain"/>
    <property type="match status" value="1"/>
</dbReference>
<dbReference type="SUPFAM" id="SSF53623">
    <property type="entry name" value="MurD-like peptide ligases, catalytic domain"/>
    <property type="match status" value="1"/>
</dbReference>
<dbReference type="SUPFAM" id="SSF53244">
    <property type="entry name" value="MurD-like peptide ligases, peptide-binding domain"/>
    <property type="match status" value="1"/>
</dbReference>
<feature type="chain" id="PRO_0000108968" description="UDP-N-acetylmuramoylalanine--D-glutamate ligase">
    <location>
        <begin position="1"/>
        <end position="444"/>
    </location>
</feature>
<feature type="binding site" evidence="1">
    <location>
        <begin position="109"/>
        <end position="115"/>
    </location>
    <ligand>
        <name>ATP</name>
        <dbReference type="ChEBI" id="CHEBI:30616"/>
    </ligand>
</feature>
<keyword id="KW-0067">ATP-binding</keyword>
<keyword id="KW-0131">Cell cycle</keyword>
<keyword id="KW-0132">Cell division</keyword>
<keyword id="KW-0133">Cell shape</keyword>
<keyword id="KW-0961">Cell wall biogenesis/degradation</keyword>
<keyword id="KW-0963">Cytoplasm</keyword>
<keyword id="KW-0436">Ligase</keyword>
<keyword id="KW-0547">Nucleotide-binding</keyword>
<keyword id="KW-0573">Peptidoglycan synthesis</keyword>
<evidence type="ECO:0000255" key="1">
    <source>
        <dbReference type="HAMAP-Rule" id="MF_00639"/>
    </source>
</evidence>